<sequence>MAKLTQEEILEAIAGMTVLELSELVKAVEDKFGVKAAAPAVAVAAAAPAAAAAEEKTEFNVELTSAAADKKIAVIKVVREITGLGLKEAKDLVDGAPKVIKENVAKAEAEEMKKKVTEAGGVVTLK</sequence>
<gene>
    <name evidence="1" type="primary">rplL</name>
    <name type="ordered locus">Emin_1429</name>
</gene>
<protein>
    <recommendedName>
        <fullName evidence="1">Large ribosomal subunit protein bL12</fullName>
    </recommendedName>
    <alternativeName>
        <fullName evidence="2">50S ribosomal protein L7/L12</fullName>
    </alternativeName>
</protein>
<organism>
    <name type="scientific">Elusimicrobium minutum (strain Pei191)</name>
    <dbReference type="NCBI Taxonomy" id="445932"/>
    <lineage>
        <taxon>Bacteria</taxon>
        <taxon>Pseudomonadati</taxon>
        <taxon>Elusimicrobiota</taxon>
        <taxon>Elusimicrobia</taxon>
        <taxon>Elusimicrobiales</taxon>
        <taxon>Elusimicrobiaceae</taxon>
        <taxon>Elusimicrobium</taxon>
    </lineage>
</organism>
<accession>B2KEN2</accession>
<evidence type="ECO:0000255" key="1">
    <source>
        <dbReference type="HAMAP-Rule" id="MF_00368"/>
    </source>
</evidence>
<evidence type="ECO:0000305" key="2"/>
<comment type="function">
    <text evidence="1">Forms part of the ribosomal stalk which helps the ribosome interact with GTP-bound translation factors. Is thus essential for accurate translation.</text>
</comment>
<comment type="subunit">
    <text evidence="1">Homodimer. Part of the ribosomal stalk of the 50S ribosomal subunit. Forms a multimeric L10(L12)X complex, where L10 forms an elongated spine to which 2 to 4 L12 dimers bind in a sequential fashion. Binds GTP-bound translation factors.</text>
</comment>
<comment type="similarity">
    <text evidence="1">Belongs to the bacterial ribosomal protein bL12 family.</text>
</comment>
<reference key="1">
    <citation type="journal article" date="2009" name="Appl. Environ. Microbiol.">
        <title>Genomic analysis of 'Elusimicrobium minutum,' the first cultivated representative of the phylum 'Elusimicrobia' (formerly termite group 1).</title>
        <authorList>
            <person name="Herlemann D.P.R."/>
            <person name="Geissinger O."/>
            <person name="Ikeda-Ohtsubo W."/>
            <person name="Kunin V."/>
            <person name="Sun H."/>
            <person name="Lapidus A."/>
            <person name="Hugenholtz P."/>
            <person name="Brune A."/>
        </authorList>
    </citation>
    <scope>NUCLEOTIDE SEQUENCE [LARGE SCALE GENOMIC DNA]</scope>
    <source>
        <strain>Pei191</strain>
    </source>
</reference>
<feature type="chain" id="PRO_1000121437" description="Large ribosomal subunit protein bL12">
    <location>
        <begin position="1"/>
        <end position="126"/>
    </location>
</feature>
<dbReference type="EMBL" id="CP001055">
    <property type="protein sequence ID" value="ACC98978.1"/>
    <property type="molecule type" value="Genomic_DNA"/>
</dbReference>
<dbReference type="RefSeq" id="WP_012415593.1">
    <property type="nucleotide sequence ID" value="NC_010644.1"/>
</dbReference>
<dbReference type="SMR" id="B2KEN2"/>
<dbReference type="STRING" id="445932.Emin_1429"/>
<dbReference type="KEGG" id="emi:Emin_1429"/>
<dbReference type="HOGENOM" id="CLU_086499_3_2_0"/>
<dbReference type="OrthoDB" id="9811748at2"/>
<dbReference type="Proteomes" id="UP000001029">
    <property type="component" value="Chromosome"/>
</dbReference>
<dbReference type="GO" id="GO:0022625">
    <property type="term" value="C:cytosolic large ribosomal subunit"/>
    <property type="evidence" value="ECO:0007669"/>
    <property type="project" value="TreeGrafter"/>
</dbReference>
<dbReference type="GO" id="GO:0003729">
    <property type="term" value="F:mRNA binding"/>
    <property type="evidence" value="ECO:0007669"/>
    <property type="project" value="TreeGrafter"/>
</dbReference>
<dbReference type="GO" id="GO:0003735">
    <property type="term" value="F:structural constituent of ribosome"/>
    <property type="evidence" value="ECO:0007669"/>
    <property type="project" value="InterPro"/>
</dbReference>
<dbReference type="GO" id="GO:0006412">
    <property type="term" value="P:translation"/>
    <property type="evidence" value="ECO:0007669"/>
    <property type="project" value="UniProtKB-UniRule"/>
</dbReference>
<dbReference type="CDD" id="cd00387">
    <property type="entry name" value="Ribosomal_L7_L12"/>
    <property type="match status" value="1"/>
</dbReference>
<dbReference type="FunFam" id="3.30.1390.10:FF:000001">
    <property type="entry name" value="50S ribosomal protein L7/L12"/>
    <property type="match status" value="1"/>
</dbReference>
<dbReference type="Gene3D" id="3.30.1390.10">
    <property type="match status" value="1"/>
</dbReference>
<dbReference type="Gene3D" id="1.20.5.710">
    <property type="entry name" value="Single helix bin"/>
    <property type="match status" value="1"/>
</dbReference>
<dbReference type="HAMAP" id="MF_00368">
    <property type="entry name" value="Ribosomal_bL12"/>
    <property type="match status" value="1"/>
</dbReference>
<dbReference type="InterPro" id="IPR000206">
    <property type="entry name" value="Ribosomal_bL12"/>
</dbReference>
<dbReference type="InterPro" id="IPR013823">
    <property type="entry name" value="Ribosomal_bL12_C"/>
</dbReference>
<dbReference type="InterPro" id="IPR014719">
    <property type="entry name" value="Ribosomal_bL12_C/ClpS-like"/>
</dbReference>
<dbReference type="InterPro" id="IPR008932">
    <property type="entry name" value="Ribosomal_bL12_oligo"/>
</dbReference>
<dbReference type="InterPro" id="IPR036235">
    <property type="entry name" value="Ribosomal_bL12_oligo_N_sf"/>
</dbReference>
<dbReference type="NCBIfam" id="TIGR00855">
    <property type="entry name" value="L12"/>
    <property type="match status" value="1"/>
</dbReference>
<dbReference type="PANTHER" id="PTHR45987">
    <property type="entry name" value="39S RIBOSOMAL PROTEIN L12"/>
    <property type="match status" value="1"/>
</dbReference>
<dbReference type="PANTHER" id="PTHR45987:SF4">
    <property type="entry name" value="LARGE RIBOSOMAL SUBUNIT PROTEIN BL12M"/>
    <property type="match status" value="1"/>
</dbReference>
<dbReference type="Pfam" id="PF00542">
    <property type="entry name" value="Ribosomal_L12"/>
    <property type="match status" value="1"/>
</dbReference>
<dbReference type="Pfam" id="PF16320">
    <property type="entry name" value="Ribosomal_L12_N"/>
    <property type="match status" value="1"/>
</dbReference>
<dbReference type="SUPFAM" id="SSF54736">
    <property type="entry name" value="ClpS-like"/>
    <property type="match status" value="1"/>
</dbReference>
<dbReference type="SUPFAM" id="SSF48300">
    <property type="entry name" value="Ribosomal protein L7/12, oligomerisation (N-terminal) domain"/>
    <property type="match status" value="1"/>
</dbReference>
<name>RL7_ELUMP</name>
<proteinExistence type="inferred from homology"/>
<keyword id="KW-1185">Reference proteome</keyword>
<keyword id="KW-0687">Ribonucleoprotein</keyword>
<keyword id="KW-0689">Ribosomal protein</keyword>